<keyword id="KW-0010">Activator</keyword>
<keyword id="KW-0238">DNA-binding</keyword>
<keyword id="KW-1185">Reference proteome</keyword>
<keyword id="KW-0804">Transcription</keyword>
<keyword id="KW-0805">Transcription regulation</keyword>
<protein>
    <recommendedName>
        <fullName evidence="1">Purine biosynthesis transcriptional activator PurR</fullName>
    </recommendedName>
</protein>
<organism>
    <name type="scientific">Lactococcus lactis subsp. lactis (strain IL1403)</name>
    <name type="common">Streptococcus lactis</name>
    <dbReference type="NCBI Taxonomy" id="272623"/>
    <lineage>
        <taxon>Bacteria</taxon>
        <taxon>Bacillati</taxon>
        <taxon>Bacillota</taxon>
        <taxon>Bacilli</taxon>
        <taxon>Lactobacillales</taxon>
        <taxon>Streptococcaceae</taxon>
        <taxon>Lactococcus</taxon>
    </lineage>
</organism>
<feature type="chain" id="PRO_0000139700" description="Purine biosynthesis transcriptional activator PurR">
    <location>
        <begin position="1"/>
        <end position="271"/>
    </location>
</feature>
<feature type="region of interest" description="DNA binding domain" evidence="2">
    <location>
        <begin position="1"/>
        <end position="71"/>
    </location>
</feature>
<feature type="region of interest" description="Effector binding domain" evidence="2">
    <location>
        <begin position="72"/>
        <end position="271"/>
    </location>
</feature>
<accession>P0A3Z9</accession>
<accession>O53065</accession>
<gene>
    <name type="primary">purR</name>
    <name type="ordered locus">LL2259</name>
    <name type="ORF">L134453</name>
</gene>
<name>PURR_LACLA</name>
<dbReference type="EMBL" id="AE005176">
    <property type="protein sequence ID" value="AAK06357.1"/>
    <property type="molecule type" value="Genomic_DNA"/>
</dbReference>
<dbReference type="PIR" id="C86907">
    <property type="entry name" value="C86907"/>
</dbReference>
<dbReference type="RefSeq" id="NP_268416.1">
    <property type="nucleotide sequence ID" value="NC_002662.1"/>
</dbReference>
<dbReference type="RefSeq" id="WP_010906422.1">
    <property type="nucleotide sequence ID" value="NC_002662.1"/>
</dbReference>
<dbReference type="SMR" id="P0A3Z9"/>
<dbReference type="PaxDb" id="272623-L134453"/>
<dbReference type="EnsemblBacteria" id="AAK06357">
    <property type="protein sequence ID" value="AAK06357"/>
    <property type="gene ID" value="L134453"/>
</dbReference>
<dbReference type="GeneID" id="89634608"/>
<dbReference type="KEGG" id="lla:L134453"/>
<dbReference type="PATRIC" id="fig|272623.7.peg.2424"/>
<dbReference type="eggNOG" id="COG0503">
    <property type="taxonomic scope" value="Bacteria"/>
</dbReference>
<dbReference type="HOGENOM" id="CLU_088227_0_0_9"/>
<dbReference type="OrthoDB" id="4213751at2"/>
<dbReference type="Proteomes" id="UP000002196">
    <property type="component" value="Chromosome"/>
</dbReference>
<dbReference type="GO" id="GO:0003677">
    <property type="term" value="F:DNA binding"/>
    <property type="evidence" value="ECO:0007669"/>
    <property type="project" value="UniProtKB-KW"/>
</dbReference>
<dbReference type="GO" id="GO:0045892">
    <property type="term" value="P:negative regulation of DNA-templated transcription"/>
    <property type="evidence" value="ECO:0007669"/>
    <property type="project" value="InterPro"/>
</dbReference>
<dbReference type="GO" id="GO:0045982">
    <property type="term" value="P:negative regulation of purine nucleobase metabolic process"/>
    <property type="evidence" value="ECO:0007669"/>
    <property type="project" value="InterPro"/>
</dbReference>
<dbReference type="CDD" id="cd06223">
    <property type="entry name" value="PRTases_typeI"/>
    <property type="match status" value="1"/>
</dbReference>
<dbReference type="Gene3D" id="3.40.50.2020">
    <property type="match status" value="1"/>
</dbReference>
<dbReference type="Gene3D" id="1.10.10.10">
    <property type="entry name" value="Winged helix-like DNA-binding domain superfamily/Winged helix DNA-binding domain"/>
    <property type="match status" value="1"/>
</dbReference>
<dbReference type="InterPro" id="IPR000836">
    <property type="entry name" value="PRibTrfase_dom"/>
</dbReference>
<dbReference type="InterPro" id="IPR029057">
    <property type="entry name" value="PRTase-like"/>
</dbReference>
<dbReference type="InterPro" id="IPR050118">
    <property type="entry name" value="Pur/Pyrimidine_PRTase"/>
</dbReference>
<dbReference type="InterPro" id="IPR015265">
    <property type="entry name" value="PuR_N"/>
</dbReference>
<dbReference type="InterPro" id="IPR010078">
    <property type="entry name" value="PurR_Bsub"/>
</dbReference>
<dbReference type="InterPro" id="IPR036388">
    <property type="entry name" value="WH-like_DNA-bd_sf"/>
</dbReference>
<dbReference type="InterPro" id="IPR036390">
    <property type="entry name" value="WH_DNA-bd_sf"/>
</dbReference>
<dbReference type="NCBIfam" id="TIGR01743">
    <property type="entry name" value="purR_Bsub"/>
    <property type="match status" value="1"/>
</dbReference>
<dbReference type="PANTHER" id="PTHR43864">
    <property type="entry name" value="HYPOXANTHINE/GUANINE PHOSPHORIBOSYLTRANSFERASE"/>
    <property type="match status" value="1"/>
</dbReference>
<dbReference type="PANTHER" id="PTHR43864:SF2">
    <property type="entry name" value="PUR OPERON REPRESSOR"/>
    <property type="match status" value="1"/>
</dbReference>
<dbReference type="Pfam" id="PF00156">
    <property type="entry name" value="Pribosyltran"/>
    <property type="match status" value="1"/>
</dbReference>
<dbReference type="Pfam" id="PF09182">
    <property type="entry name" value="PuR_N"/>
    <property type="match status" value="1"/>
</dbReference>
<dbReference type="SUPFAM" id="SSF53271">
    <property type="entry name" value="PRTase-like"/>
    <property type="match status" value="1"/>
</dbReference>
<dbReference type="SUPFAM" id="SSF46785">
    <property type="entry name" value="Winged helix' DNA-binding domain"/>
    <property type="match status" value="1"/>
</dbReference>
<sequence length="271" mass="30361">MKRNERLVDFTNFLINHPNQMLNLNELSKHYEVAKSSISEDLVFIKRVFENQGVGLVETFPGSLGGVRFTPYITDERSLEMSQEIAELLREENRILPGGYIYLSDILGTPSNLRKIGQIIAHEYHEKQVDVVMTIATKGIPIAQSVAEILDVPFVIVRRDPKVTEGATLNVNYMSGSSSRVENMTLSKRSLSIGQNVLIVDDFMKGAGTINGMRSLVHEFDCLLAGVAVFLEGPFKGERLIDDYKSILKVDRIDIANRSIDVQLGNIFNDK</sequence>
<proteinExistence type="inferred from homology"/>
<comment type="function">
    <text evidence="1">DNA-binding transcriptional activator that controls the expression of a number of genes involved in the synthesis, metabolism and transport of purines.</text>
</comment>
<comment type="subunit">
    <text evidence="2">Homodimer.</text>
</comment>
<comment type="domain">
    <text evidence="2">Contains an N-terminal DNA-binding winged helix-turn-helix domain and a C-terminal regulatory domain (or effector binding domain) resembling phosphoribosyltransferase (PRT) domain (By similarity). However, the PRT domain lacks enzymatic activity and serves a purely regulatory role by binding effector molecules (By similarity).</text>
</comment>
<comment type="similarity">
    <text evidence="3">Belongs to the purine/pyrimidine phosphoribosyltransferase family. PurR subfamily.</text>
</comment>
<evidence type="ECO:0000250" key="1">
    <source>
        <dbReference type="UniProtKB" id="P0A400"/>
    </source>
</evidence>
<evidence type="ECO:0000250" key="2">
    <source>
        <dbReference type="UniProtKB" id="P37551"/>
    </source>
</evidence>
<evidence type="ECO:0000305" key="3"/>
<reference key="1">
    <citation type="journal article" date="2001" name="Genome Res.">
        <title>The complete genome sequence of the lactic acid bacterium Lactococcus lactis ssp. lactis IL1403.</title>
        <authorList>
            <person name="Bolotin A."/>
            <person name="Wincker P."/>
            <person name="Mauger S."/>
            <person name="Jaillon O."/>
            <person name="Malarme K."/>
            <person name="Weissenbach J."/>
            <person name="Ehrlich S.D."/>
            <person name="Sorokin A."/>
        </authorList>
    </citation>
    <scope>NUCLEOTIDE SEQUENCE [LARGE SCALE GENOMIC DNA]</scope>
    <source>
        <strain>IL1403</strain>
    </source>
</reference>